<reference key="1">
    <citation type="journal article" date="2007" name="Genome Biol.">
        <title>Genome analysis and genome-wide proteomics of Thermococcus gammatolerans, the most radioresistant organism known amongst the Archaea.</title>
        <authorList>
            <person name="Zivanovic Y."/>
            <person name="Armengaud J."/>
            <person name="Lagorce A."/>
            <person name="Leplat C."/>
            <person name="Guerin P."/>
            <person name="Dutertre M."/>
            <person name="Anthouard V."/>
            <person name="Forterre P."/>
            <person name="Wincker P."/>
            <person name="Confalonieri F."/>
        </authorList>
    </citation>
    <scope>NUCLEOTIDE SEQUENCE [LARGE SCALE GENOMIC DNA]</scope>
    <source>
        <strain>DSM 15229 / JCM 11827 / EJ3</strain>
    </source>
</reference>
<gene>
    <name evidence="1" type="primary">atpC</name>
    <name type="ordered locus">TGAM_0144</name>
</gene>
<sequence>MGAETVTAILDTTLGVVFTWLGWKTAKIIRKYTPYSYPNARINAMEAKLLTGQRFNELAESRTLQNFIVNLEDTDYKVHLSGVTEDPLEIERAFERALASTYLLMEEILPKRVSGFFRLLLEEWDVRNIASVVKAKVRGEPAIDYVVEIGTMVPKVKAIAEAKTMEEILVILEGTPYEEHYQRLLLGEIDVDQFETELYKVYYSRLLEYATSRKEEERLILEEFVRTKIDIRNIVTLLRAKRAGLPGEVIKRHLIPGGSVKLDTALNVDDLGMALAELDSTKYGKVLRDEREKIEKDLTLVEPVLQNHLLRRMEELTRFYPLSVATPLSYILKKEREIKKLRAMAKLIADGFEPEKIKEIIGEELA</sequence>
<feature type="chain" id="PRO_1000205064" description="A-type ATP synthase subunit C">
    <location>
        <begin position="1"/>
        <end position="366"/>
    </location>
</feature>
<dbReference type="EMBL" id="CP001398">
    <property type="protein sequence ID" value="ACS32646.1"/>
    <property type="molecule type" value="Genomic_DNA"/>
</dbReference>
<dbReference type="RefSeq" id="WP_015857766.1">
    <property type="nucleotide sequence ID" value="NC_012804.1"/>
</dbReference>
<dbReference type="SMR" id="C5A334"/>
<dbReference type="STRING" id="593117.TGAM_0144"/>
<dbReference type="PaxDb" id="593117-TGAM_0144"/>
<dbReference type="GeneID" id="7988724"/>
<dbReference type="KEGG" id="tga:TGAM_0144"/>
<dbReference type="PATRIC" id="fig|593117.10.peg.147"/>
<dbReference type="eggNOG" id="arCOG02459">
    <property type="taxonomic scope" value="Archaea"/>
</dbReference>
<dbReference type="HOGENOM" id="CLU_059311_0_0_2"/>
<dbReference type="OrthoDB" id="4272at2157"/>
<dbReference type="Proteomes" id="UP000001488">
    <property type="component" value="Chromosome"/>
</dbReference>
<dbReference type="GO" id="GO:0005886">
    <property type="term" value="C:plasma membrane"/>
    <property type="evidence" value="ECO:0007669"/>
    <property type="project" value="UniProtKB-SubCell"/>
</dbReference>
<dbReference type="GO" id="GO:0033179">
    <property type="term" value="C:proton-transporting V-type ATPase, V0 domain"/>
    <property type="evidence" value="ECO:0007669"/>
    <property type="project" value="InterPro"/>
</dbReference>
<dbReference type="GO" id="GO:0005524">
    <property type="term" value="F:ATP binding"/>
    <property type="evidence" value="ECO:0007669"/>
    <property type="project" value="UniProtKB-UniRule"/>
</dbReference>
<dbReference type="GO" id="GO:0046933">
    <property type="term" value="F:proton-transporting ATP synthase activity, rotational mechanism"/>
    <property type="evidence" value="ECO:0007669"/>
    <property type="project" value="UniProtKB-UniRule"/>
</dbReference>
<dbReference type="GO" id="GO:0046961">
    <property type="term" value="F:proton-transporting ATPase activity, rotational mechanism"/>
    <property type="evidence" value="ECO:0007669"/>
    <property type="project" value="InterPro"/>
</dbReference>
<dbReference type="GO" id="GO:0042777">
    <property type="term" value="P:proton motive force-driven plasma membrane ATP synthesis"/>
    <property type="evidence" value="ECO:0007669"/>
    <property type="project" value="UniProtKB-UniRule"/>
</dbReference>
<dbReference type="Gene3D" id="1.10.132.50">
    <property type="entry name" value="ATP synthase (C/AC39) subunit, domain 3"/>
    <property type="match status" value="3"/>
</dbReference>
<dbReference type="HAMAP" id="MF_00314">
    <property type="entry name" value="ATP_synth_C_arch"/>
    <property type="match status" value="1"/>
</dbReference>
<dbReference type="InterPro" id="IPR036079">
    <property type="entry name" value="ATPase_csu/dsu_sf"/>
</dbReference>
<dbReference type="InterPro" id="IPR014272">
    <property type="entry name" value="ATPase_V0-cplx_csu"/>
</dbReference>
<dbReference type="InterPro" id="IPR002843">
    <property type="entry name" value="ATPase_V0-cplx_csu/dsu"/>
</dbReference>
<dbReference type="InterPro" id="IPR050873">
    <property type="entry name" value="V-ATPase_V0D/AC39_subunit"/>
</dbReference>
<dbReference type="InterPro" id="IPR044911">
    <property type="entry name" value="V-type_ATPase_csu/dsu_dom_3"/>
</dbReference>
<dbReference type="NCBIfam" id="TIGR02923">
    <property type="entry name" value="AhaC"/>
    <property type="match status" value="1"/>
</dbReference>
<dbReference type="NCBIfam" id="NF002269">
    <property type="entry name" value="PRK01198.1-5"/>
    <property type="match status" value="1"/>
</dbReference>
<dbReference type="PANTHER" id="PTHR38682">
    <property type="entry name" value="V-TYPE ATP SYNTHASE SUBUNIT C"/>
    <property type="match status" value="1"/>
</dbReference>
<dbReference type="PANTHER" id="PTHR38682:SF1">
    <property type="entry name" value="V-TYPE ATP SYNTHASE SUBUNIT C"/>
    <property type="match status" value="1"/>
</dbReference>
<dbReference type="Pfam" id="PF01992">
    <property type="entry name" value="vATP-synt_AC39"/>
    <property type="match status" value="1"/>
</dbReference>
<dbReference type="SUPFAM" id="SSF103486">
    <property type="entry name" value="V-type ATP synthase subunit C"/>
    <property type="match status" value="1"/>
</dbReference>
<evidence type="ECO:0000255" key="1">
    <source>
        <dbReference type="HAMAP-Rule" id="MF_00314"/>
    </source>
</evidence>
<proteinExistence type="inferred from homology"/>
<name>AATC_THEGJ</name>
<comment type="function">
    <text evidence="1">Component of the A-type ATP synthase that produces ATP from ADP in the presence of a proton gradient across the membrane.</text>
</comment>
<comment type="subunit">
    <text evidence="1">Has multiple subunits with at least A(3), B(3), C, D, E, F, H, I and proteolipid K(x).</text>
</comment>
<comment type="subcellular location">
    <subcellularLocation>
        <location evidence="1">Cell membrane</location>
        <topology evidence="1">Peripheral membrane protein</topology>
    </subcellularLocation>
</comment>
<comment type="similarity">
    <text evidence="1">Belongs to the V-ATPase V0D/AC39 subunit family.</text>
</comment>
<accession>C5A334</accession>
<organism>
    <name type="scientific">Thermococcus gammatolerans (strain DSM 15229 / JCM 11827 / EJ3)</name>
    <dbReference type="NCBI Taxonomy" id="593117"/>
    <lineage>
        <taxon>Archaea</taxon>
        <taxon>Methanobacteriati</taxon>
        <taxon>Methanobacteriota</taxon>
        <taxon>Thermococci</taxon>
        <taxon>Thermococcales</taxon>
        <taxon>Thermococcaceae</taxon>
        <taxon>Thermococcus</taxon>
    </lineage>
</organism>
<protein>
    <recommendedName>
        <fullName evidence="1">A-type ATP synthase subunit C</fullName>
    </recommendedName>
</protein>
<keyword id="KW-0066">ATP synthesis</keyword>
<keyword id="KW-1003">Cell membrane</keyword>
<keyword id="KW-0375">Hydrogen ion transport</keyword>
<keyword id="KW-0406">Ion transport</keyword>
<keyword id="KW-0472">Membrane</keyword>
<keyword id="KW-1185">Reference proteome</keyword>
<keyword id="KW-0813">Transport</keyword>